<sequence>MEDYLEGLERAMRSMPAAKGTKERFQIPVPRIFYEGKTTVLDNFAAIADALNRDPDHLMKFLLQELGTAGKIEGHRGVFQGKFTEQAIQNQIAAYVDEYVICSECKLPDTHLIKSDRVLMLKCDACGAHRPVKKRKAKAVVARDVIEEGETYELRIESVGSKGDGIAKVDKYLIFVPNTSKGEIVKAKVKKISGTLAFAEIVERKGKA</sequence>
<feature type="chain" id="PRO_1000021654" description="Translation initiation factor 2 subunit beta">
    <location>
        <begin position="1"/>
        <end position="208"/>
    </location>
</feature>
<feature type="domain" description="TRAM" evidence="1">
    <location>
        <begin position="145"/>
        <end position="203"/>
    </location>
</feature>
<reference key="1">
    <citation type="submission" date="2006-10" db="EMBL/GenBank/DDBJ databases">
        <title>Complete sequence of Methanosaeta thermophila PT.</title>
        <authorList>
            <consortium name="US DOE Joint Genome Institute"/>
            <person name="Copeland A."/>
            <person name="Lucas S."/>
            <person name="Lapidus A."/>
            <person name="Barry K."/>
            <person name="Detter J.C."/>
            <person name="Glavina del Rio T."/>
            <person name="Hammon N."/>
            <person name="Israni S."/>
            <person name="Pitluck S."/>
            <person name="Chain P."/>
            <person name="Malfatti S."/>
            <person name="Shin M."/>
            <person name="Vergez L."/>
            <person name="Schmutz J."/>
            <person name="Larimer F."/>
            <person name="Land M."/>
            <person name="Hauser L."/>
            <person name="Kyrpides N."/>
            <person name="Kim E."/>
            <person name="Smith K.S."/>
            <person name="Ingram-Smith C."/>
            <person name="Richardson P."/>
        </authorList>
    </citation>
    <scope>NUCLEOTIDE SEQUENCE [LARGE SCALE GENOMIC DNA]</scope>
    <source>
        <strain>DSM 6194 / JCM 14653 / NBRC 101360 / PT</strain>
    </source>
</reference>
<proteinExistence type="inferred from homology"/>
<organism>
    <name type="scientific">Methanothrix thermoacetophila (strain DSM 6194 / JCM 14653 / NBRC 101360 / PT)</name>
    <name type="common">Methanosaeta thermophila</name>
    <dbReference type="NCBI Taxonomy" id="349307"/>
    <lineage>
        <taxon>Archaea</taxon>
        <taxon>Methanobacteriati</taxon>
        <taxon>Methanobacteriota</taxon>
        <taxon>Stenosarchaea group</taxon>
        <taxon>Methanomicrobia</taxon>
        <taxon>Methanotrichales</taxon>
        <taxon>Methanotrichaceae</taxon>
        <taxon>Methanothrix</taxon>
    </lineage>
</organism>
<gene>
    <name evidence="1" type="primary">eif2b</name>
    <name type="ordered locus">Mthe_0180</name>
</gene>
<comment type="function">
    <text evidence="1">eIF-2 functions in the early steps of protein synthesis by forming a ternary complex with GTP and initiator tRNA.</text>
</comment>
<comment type="subunit">
    <text evidence="1">Heterotrimer composed of an alpha, a beta and a gamma chain.</text>
</comment>
<comment type="similarity">
    <text evidence="1">Belongs to the eIF-2-beta/eIF-5 family.</text>
</comment>
<dbReference type="EMBL" id="CP000477">
    <property type="protein sequence ID" value="ABK13979.1"/>
    <property type="molecule type" value="Genomic_DNA"/>
</dbReference>
<dbReference type="RefSeq" id="WP_011695378.1">
    <property type="nucleotide sequence ID" value="NC_008553.1"/>
</dbReference>
<dbReference type="SMR" id="A0B5K5"/>
<dbReference type="STRING" id="349307.Mthe_0180"/>
<dbReference type="GeneID" id="4462162"/>
<dbReference type="KEGG" id="mtp:Mthe_0180"/>
<dbReference type="HOGENOM" id="CLU_026663_3_0_2"/>
<dbReference type="OrthoDB" id="38099at2157"/>
<dbReference type="Proteomes" id="UP000000674">
    <property type="component" value="Chromosome"/>
</dbReference>
<dbReference type="GO" id="GO:0003743">
    <property type="term" value="F:translation initiation factor activity"/>
    <property type="evidence" value="ECO:0007669"/>
    <property type="project" value="UniProtKB-UniRule"/>
</dbReference>
<dbReference type="FunFam" id="3.30.30.170:FF:000001">
    <property type="entry name" value="Eukaryotic translation initiation factor 2 subunit"/>
    <property type="match status" value="1"/>
</dbReference>
<dbReference type="Gene3D" id="3.30.30.170">
    <property type="match status" value="1"/>
</dbReference>
<dbReference type="Gene3D" id="2.40.50.140">
    <property type="entry name" value="Nucleic acid-binding proteins"/>
    <property type="match status" value="1"/>
</dbReference>
<dbReference type="HAMAP" id="MF_00232">
    <property type="entry name" value="eIF_2_beta"/>
    <property type="match status" value="1"/>
</dbReference>
<dbReference type="InterPro" id="IPR045196">
    <property type="entry name" value="IF2/IF5"/>
</dbReference>
<dbReference type="InterPro" id="IPR012340">
    <property type="entry name" value="NA-bd_OB-fold"/>
</dbReference>
<dbReference type="InterPro" id="IPR004458">
    <property type="entry name" value="TIF2_bsu_arc"/>
</dbReference>
<dbReference type="InterPro" id="IPR002792">
    <property type="entry name" value="TRAM_dom"/>
</dbReference>
<dbReference type="InterPro" id="IPR002735">
    <property type="entry name" value="Transl_init_fac_IF2/IF5_dom"/>
</dbReference>
<dbReference type="InterPro" id="IPR016189">
    <property type="entry name" value="Transl_init_fac_IF2/IF5_N"/>
</dbReference>
<dbReference type="InterPro" id="IPR016190">
    <property type="entry name" value="Transl_init_fac_IF2/IF5_Zn-bd"/>
</dbReference>
<dbReference type="NCBIfam" id="TIGR00311">
    <property type="entry name" value="aIF-2beta"/>
    <property type="match status" value="1"/>
</dbReference>
<dbReference type="NCBIfam" id="NF003067">
    <property type="entry name" value="PRK03988.1"/>
    <property type="match status" value="1"/>
</dbReference>
<dbReference type="NCBIfam" id="NF008993">
    <property type="entry name" value="PRK12336.1"/>
    <property type="match status" value="1"/>
</dbReference>
<dbReference type="PANTHER" id="PTHR23001">
    <property type="entry name" value="EUKARYOTIC TRANSLATION INITIATION FACTOR"/>
    <property type="match status" value="1"/>
</dbReference>
<dbReference type="PANTHER" id="PTHR23001:SF3">
    <property type="entry name" value="EUKARYOTIC TRANSLATION INITIATION FACTOR 2 SUBUNIT 2"/>
    <property type="match status" value="1"/>
</dbReference>
<dbReference type="Pfam" id="PF01873">
    <property type="entry name" value="eIF-5_eIF-2B"/>
    <property type="match status" value="1"/>
</dbReference>
<dbReference type="Pfam" id="PF01938">
    <property type="entry name" value="TRAM"/>
    <property type="match status" value="1"/>
</dbReference>
<dbReference type="SMART" id="SM00653">
    <property type="entry name" value="eIF2B_5"/>
    <property type="match status" value="1"/>
</dbReference>
<dbReference type="SUPFAM" id="SSF50249">
    <property type="entry name" value="Nucleic acid-binding proteins"/>
    <property type="match status" value="1"/>
</dbReference>
<dbReference type="SUPFAM" id="SSF100966">
    <property type="entry name" value="Translation initiation factor 2 beta, aIF2beta, N-terminal domain"/>
    <property type="match status" value="1"/>
</dbReference>
<dbReference type="SUPFAM" id="SSF75689">
    <property type="entry name" value="Zinc-binding domain of translation initiation factor 2 beta"/>
    <property type="match status" value="1"/>
</dbReference>
<dbReference type="PROSITE" id="PS50926">
    <property type="entry name" value="TRAM"/>
    <property type="match status" value="1"/>
</dbReference>
<evidence type="ECO:0000255" key="1">
    <source>
        <dbReference type="HAMAP-Rule" id="MF_00232"/>
    </source>
</evidence>
<protein>
    <recommendedName>
        <fullName evidence="1">Translation initiation factor 2 subunit beta</fullName>
    </recommendedName>
    <alternativeName>
        <fullName evidence="1">aIF2-beta</fullName>
    </alternativeName>
    <alternativeName>
        <fullName evidence="1">eIF-2-beta</fullName>
    </alternativeName>
</protein>
<keyword id="KW-0396">Initiation factor</keyword>
<keyword id="KW-0648">Protein biosynthesis</keyword>
<keyword id="KW-1185">Reference proteome</keyword>
<name>IF2B_METTP</name>
<accession>A0B5K5</accession>